<evidence type="ECO:0000255" key="1">
    <source>
        <dbReference type="HAMAP-Rule" id="MF_00015"/>
    </source>
</evidence>
<proteinExistence type="inferred from homology"/>
<organism>
    <name type="scientific">Roseobacter denitrificans (strain ATCC 33942 / OCh 114)</name>
    <name type="common">Erythrobacter sp. (strain OCh 114)</name>
    <name type="synonym">Roseobacter denitrificans</name>
    <dbReference type="NCBI Taxonomy" id="375451"/>
    <lineage>
        <taxon>Bacteria</taxon>
        <taxon>Pseudomonadati</taxon>
        <taxon>Pseudomonadota</taxon>
        <taxon>Alphaproteobacteria</taxon>
        <taxon>Rhodobacterales</taxon>
        <taxon>Roseobacteraceae</taxon>
        <taxon>Roseobacter</taxon>
    </lineage>
</organism>
<comment type="function">
    <text evidence="1">Represses a number of genes involved in the response to DNA damage (SOS response), including recA and lexA. In the presence of single-stranded DNA, RecA interacts with LexA causing an autocatalytic cleavage which disrupts the DNA-binding part of LexA, leading to derepression of the SOS regulon and eventually DNA repair.</text>
</comment>
<comment type="catalytic activity">
    <reaction evidence="1">
        <text>Hydrolysis of Ala-|-Gly bond in repressor LexA.</text>
        <dbReference type="EC" id="3.4.21.88"/>
    </reaction>
</comment>
<comment type="subunit">
    <text evidence="1">Homodimer.</text>
</comment>
<comment type="similarity">
    <text evidence="1">Belongs to the peptidase S24 family.</text>
</comment>
<keyword id="KW-0068">Autocatalytic cleavage</keyword>
<keyword id="KW-0227">DNA damage</keyword>
<keyword id="KW-0234">DNA repair</keyword>
<keyword id="KW-0235">DNA replication</keyword>
<keyword id="KW-0238">DNA-binding</keyword>
<keyword id="KW-0378">Hydrolase</keyword>
<keyword id="KW-1185">Reference proteome</keyword>
<keyword id="KW-0678">Repressor</keyword>
<keyword id="KW-0742">SOS response</keyword>
<keyword id="KW-0804">Transcription</keyword>
<keyword id="KW-0805">Transcription regulation</keyword>
<feature type="chain" id="PRO_1000001330" description="LexA repressor">
    <location>
        <begin position="1"/>
        <end position="233"/>
    </location>
</feature>
<feature type="DNA-binding region" description="H-T-H motif" evidence="1">
    <location>
        <begin position="26"/>
        <end position="46"/>
    </location>
</feature>
<feature type="active site" description="For autocatalytic cleavage activity" evidence="1">
    <location>
        <position position="154"/>
    </location>
</feature>
<feature type="active site" description="For autocatalytic cleavage activity" evidence="1">
    <location>
        <position position="192"/>
    </location>
</feature>
<feature type="site" description="Cleavage; by autolysis" evidence="1">
    <location>
        <begin position="118"/>
        <end position="119"/>
    </location>
</feature>
<accession>Q163X5</accession>
<sequence length="233" mass="25052">MLTKKQLDLLEFIHKRVQRDGVPPSFDEMKEALDLRSKSGIHRLITALEERGFIRRLAHRARAIEIVKLPETLGGAARGGFTPRVIEGDKPDAPLPAGAQAVSSADAVALPLVGRIAAGLPIEAINQNSASVAVPGQMLSGKGDHYALEVKGDSMIDAGINDGDVVVIRETSVADNGDIVVALIEDHEATLKRYMRKGSSIALEAANPAYETRVFTEDKVKVQGKLVGLIRTY</sequence>
<reference key="1">
    <citation type="journal article" date="2007" name="J. Bacteriol.">
        <title>The complete genome sequence of Roseobacter denitrificans reveals a mixotrophic rather than photosynthetic metabolism.</title>
        <authorList>
            <person name="Swingley W.D."/>
            <person name="Sadekar S."/>
            <person name="Mastrian S.D."/>
            <person name="Matthies H.J."/>
            <person name="Hao J."/>
            <person name="Ramos H."/>
            <person name="Acharya C.R."/>
            <person name="Conrad A.L."/>
            <person name="Taylor H.L."/>
            <person name="Dejesa L.C."/>
            <person name="Shah M.K."/>
            <person name="O'Huallachain M.E."/>
            <person name="Lince M.T."/>
            <person name="Blankenship R.E."/>
            <person name="Beatty J.T."/>
            <person name="Touchman J.W."/>
        </authorList>
    </citation>
    <scope>NUCLEOTIDE SEQUENCE [LARGE SCALE GENOMIC DNA]</scope>
    <source>
        <strain>ATCC 33942 / OCh 114</strain>
    </source>
</reference>
<name>LEXA_ROSDO</name>
<dbReference type="EC" id="3.4.21.88" evidence="1"/>
<dbReference type="EMBL" id="CP000362">
    <property type="protein sequence ID" value="ABG32718.1"/>
    <property type="molecule type" value="Genomic_DNA"/>
</dbReference>
<dbReference type="RefSeq" id="WP_011569334.1">
    <property type="nucleotide sequence ID" value="NC_008209.1"/>
</dbReference>
<dbReference type="SMR" id="Q163X5"/>
<dbReference type="STRING" id="375451.RD1_3216"/>
<dbReference type="MEROPS" id="S24.001"/>
<dbReference type="KEGG" id="rde:RD1_3216"/>
<dbReference type="eggNOG" id="COG1974">
    <property type="taxonomic scope" value="Bacteria"/>
</dbReference>
<dbReference type="HOGENOM" id="CLU_066192_45_2_5"/>
<dbReference type="OrthoDB" id="9802364at2"/>
<dbReference type="Proteomes" id="UP000007029">
    <property type="component" value="Chromosome"/>
</dbReference>
<dbReference type="GO" id="GO:0003677">
    <property type="term" value="F:DNA binding"/>
    <property type="evidence" value="ECO:0007669"/>
    <property type="project" value="UniProtKB-UniRule"/>
</dbReference>
<dbReference type="GO" id="GO:0004252">
    <property type="term" value="F:serine-type endopeptidase activity"/>
    <property type="evidence" value="ECO:0007669"/>
    <property type="project" value="UniProtKB-UniRule"/>
</dbReference>
<dbReference type="GO" id="GO:0006281">
    <property type="term" value="P:DNA repair"/>
    <property type="evidence" value="ECO:0007669"/>
    <property type="project" value="UniProtKB-UniRule"/>
</dbReference>
<dbReference type="GO" id="GO:0006260">
    <property type="term" value="P:DNA replication"/>
    <property type="evidence" value="ECO:0007669"/>
    <property type="project" value="UniProtKB-UniRule"/>
</dbReference>
<dbReference type="GO" id="GO:0045892">
    <property type="term" value="P:negative regulation of DNA-templated transcription"/>
    <property type="evidence" value="ECO:0007669"/>
    <property type="project" value="UniProtKB-UniRule"/>
</dbReference>
<dbReference type="GO" id="GO:0006508">
    <property type="term" value="P:proteolysis"/>
    <property type="evidence" value="ECO:0007669"/>
    <property type="project" value="InterPro"/>
</dbReference>
<dbReference type="GO" id="GO:0009432">
    <property type="term" value="P:SOS response"/>
    <property type="evidence" value="ECO:0007669"/>
    <property type="project" value="UniProtKB-UniRule"/>
</dbReference>
<dbReference type="CDD" id="cd06529">
    <property type="entry name" value="S24_LexA-like"/>
    <property type="match status" value="1"/>
</dbReference>
<dbReference type="FunFam" id="2.10.109.10:FF:000001">
    <property type="entry name" value="LexA repressor"/>
    <property type="match status" value="1"/>
</dbReference>
<dbReference type="Gene3D" id="2.10.109.10">
    <property type="entry name" value="Umud Fragment, subunit A"/>
    <property type="match status" value="1"/>
</dbReference>
<dbReference type="Gene3D" id="1.10.10.10">
    <property type="entry name" value="Winged helix-like DNA-binding domain superfamily/Winged helix DNA-binding domain"/>
    <property type="match status" value="1"/>
</dbReference>
<dbReference type="HAMAP" id="MF_00015">
    <property type="entry name" value="LexA"/>
    <property type="match status" value="1"/>
</dbReference>
<dbReference type="InterPro" id="IPR006200">
    <property type="entry name" value="LexA"/>
</dbReference>
<dbReference type="InterPro" id="IPR039418">
    <property type="entry name" value="LexA-like"/>
</dbReference>
<dbReference type="InterPro" id="IPR036286">
    <property type="entry name" value="LexA/Signal_pep-like_sf"/>
</dbReference>
<dbReference type="InterPro" id="IPR006199">
    <property type="entry name" value="LexA_DNA-bd_dom"/>
</dbReference>
<dbReference type="InterPro" id="IPR050077">
    <property type="entry name" value="LexA_repressor"/>
</dbReference>
<dbReference type="InterPro" id="IPR006197">
    <property type="entry name" value="Peptidase_S24_LexA"/>
</dbReference>
<dbReference type="InterPro" id="IPR015927">
    <property type="entry name" value="Peptidase_S24_S26A/B/C"/>
</dbReference>
<dbReference type="InterPro" id="IPR036388">
    <property type="entry name" value="WH-like_DNA-bd_sf"/>
</dbReference>
<dbReference type="InterPro" id="IPR036390">
    <property type="entry name" value="WH_DNA-bd_sf"/>
</dbReference>
<dbReference type="NCBIfam" id="TIGR00498">
    <property type="entry name" value="lexA"/>
    <property type="match status" value="1"/>
</dbReference>
<dbReference type="PANTHER" id="PTHR33516">
    <property type="entry name" value="LEXA REPRESSOR"/>
    <property type="match status" value="1"/>
</dbReference>
<dbReference type="PANTHER" id="PTHR33516:SF2">
    <property type="entry name" value="LEXA REPRESSOR-RELATED"/>
    <property type="match status" value="1"/>
</dbReference>
<dbReference type="Pfam" id="PF01726">
    <property type="entry name" value="LexA_DNA_bind"/>
    <property type="match status" value="1"/>
</dbReference>
<dbReference type="Pfam" id="PF00717">
    <property type="entry name" value="Peptidase_S24"/>
    <property type="match status" value="1"/>
</dbReference>
<dbReference type="PRINTS" id="PR00726">
    <property type="entry name" value="LEXASERPTASE"/>
</dbReference>
<dbReference type="SUPFAM" id="SSF51306">
    <property type="entry name" value="LexA/Signal peptidase"/>
    <property type="match status" value="1"/>
</dbReference>
<dbReference type="SUPFAM" id="SSF46785">
    <property type="entry name" value="Winged helix' DNA-binding domain"/>
    <property type="match status" value="1"/>
</dbReference>
<protein>
    <recommendedName>
        <fullName evidence="1">LexA repressor</fullName>
        <ecNumber evidence="1">3.4.21.88</ecNumber>
    </recommendedName>
</protein>
<gene>
    <name evidence="1" type="primary">lexA</name>
    <name type="ordered locus">RD1_3216</name>
</gene>